<dbReference type="EMBL" id="AL132964">
    <property type="protein sequence ID" value="CAB62457.1"/>
    <property type="molecule type" value="Genomic_DNA"/>
</dbReference>
<dbReference type="EMBL" id="CP002686">
    <property type="protein sequence ID" value="AEE78553.1"/>
    <property type="molecule type" value="Genomic_DNA"/>
</dbReference>
<dbReference type="EMBL" id="AY059734">
    <property type="protein sequence ID" value="AAL24091.1"/>
    <property type="molecule type" value="mRNA"/>
</dbReference>
<dbReference type="EMBL" id="BT000978">
    <property type="protein sequence ID" value="AAN41378.1"/>
    <property type="molecule type" value="mRNA"/>
</dbReference>
<dbReference type="PIR" id="T46230">
    <property type="entry name" value="T46230"/>
</dbReference>
<dbReference type="RefSeq" id="NP_190522.1">
    <property type="nucleotide sequence ID" value="NM_114813.4"/>
</dbReference>
<dbReference type="SMR" id="Q9SCK6"/>
<dbReference type="FunCoup" id="Q9SCK6">
    <property type="interactions" value="98"/>
</dbReference>
<dbReference type="IntAct" id="Q9SCK6">
    <property type="interactions" value="10"/>
</dbReference>
<dbReference type="STRING" id="3702.Q9SCK6"/>
<dbReference type="iPTMnet" id="Q9SCK6"/>
<dbReference type="PaxDb" id="3702-AT3G49530.1"/>
<dbReference type="ProteomicsDB" id="251196"/>
<dbReference type="EnsemblPlants" id="AT3G49530.1">
    <property type="protein sequence ID" value="AT3G49530.1"/>
    <property type="gene ID" value="AT3G49530"/>
</dbReference>
<dbReference type="GeneID" id="824115"/>
<dbReference type="Gramene" id="AT3G49530.1">
    <property type="protein sequence ID" value="AT3G49530.1"/>
    <property type="gene ID" value="AT3G49530"/>
</dbReference>
<dbReference type="KEGG" id="ath:AT3G49530"/>
<dbReference type="Araport" id="AT3G49530"/>
<dbReference type="TAIR" id="AT3G49530">
    <property type="gene designation" value="NAC062"/>
</dbReference>
<dbReference type="eggNOG" id="ENOG502QS98">
    <property type="taxonomic scope" value="Eukaryota"/>
</dbReference>
<dbReference type="HOGENOM" id="CLU_016524_1_0_1"/>
<dbReference type="InParanoid" id="Q9SCK6"/>
<dbReference type="PhylomeDB" id="Q9SCK6"/>
<dbReference type="PRO" id="PR:Q9SCK6"/>
<dbReference type="Proteomes" id="UP000006548">
    <property type="component" value="Chromosome 3"/>
</dbReference>
<dbReference type="ExpressionAtlas" id="Q9SCK6">
    <property type="expression patterns" value="baseline and differential"/>
</dbReference>
<dbReference type="GO" id="GO:0005634">
    <property type="term" value="C:nucleus"/>
    <property type="evidence" value="ECO:0000314"/>
    <property type="project" value="TAIR"/>
</dbReference>
<dbReference type="GO" id="GO:0005886">
    <property type="term" value="C:plasma membrane"/>
    <property type="evidence" value="ECO:0000314"/>
    <property type="project" value="TAIR"/>
</dbReference>
<dbReference type="GO" id="GO:0003700">
    <property type="term" value="F:DNA-binding transcription factor activity"/>
    <property type="evidence" value="ECO:0000314"/>
    <property type="project" value="TAIR"/>
</dbReference>
<dbReference type="GO" id="GO:0000976">
    <property type="term" value="F:transcription cis-regulatory region binding"/>
    <property type="evidence" value="ECO:0000353"/>
    <property type="project" value="TAIR"/>
</dbReference>
<dbReference type="GO" id="GO:0070417">
    <property type="term" value="P:cellular response to cold"/>
    <property type="evidence" value="ECO:0000315"/>
    <property type="project" value="TAIR"/>
</dbReference>
<dbReference type="GO" id="GO:0098542">
    <property type="term" value="P:defense response to other organism"/>
    <property type="evidence" value="ECO:0000315"/>
    <property type="project" value="TAIR"/>
</dbReference>
<dbReference type="GO" id="GO:1900103">
    <property type="term" value="P:positive regulation of endoplasmic reticulum unfolded protein response"/>
    <property type="evidence" value="ECO:0000315"/>
    <property type="project" value="TAIR"/>
</dbReference>
<dbReference type="FunFam" id="2.170.150.80:FF:000002">
    <property type="entry name" value="Nac domain-containing protein 86"/>
    <property type="match status" value="1"/>
</dbReference>
<dbReference type="Gene3D" id="2.170.150.80">
    <property type="entry name" value="NAC domain"/>
    <property type="match status" value="1"/>
</dbReference>
<dbReference type="InterPro" id="IPR003441">
    <property type="entry name" value="NAC-dom"/>
</dbReference>
<dbReference type="InterPro" id="IPR036093">
    <property type="entry name" value="NAC_dom_sf"/>
</dbReference>
<dbReference type="PANTHER" id="PTHR31744:SF216">
    <property type="entry name" value="NAC TRANSCRIPTION FACTOR"/>
    <property type="match status" value="1"/>
</dbReference>
<dbReference type="PANTHER" id="PTHR31744">
    <property type="entry name" value="PROTEIN CUP-SHAPED COTYLEDON 2-RELATED"/>
    <property type="match status" value="1"/>
</dbReference>
<dbReference type="Pfam" id="PF02365">
    <property type="entry name" value="NAM"/>
    <property type="match status" value="1"/>
</dbReference>
<dbReference type="SUPFAM" id="SSF101941">
    <property type="entry name" value="NAC domain"/>
    <property type="match status" value="1"/>
</dbReference>
<dbReference type="PROSITE" id="PS51005">
    <property type="entry name" value="NAC"/>
    <property type="match status" value="1"/>
</dbReference>
<feature type="chain" id="PRO_0000432446" description="NAC domain-containing protein 62">
    <location>
        <begin position="1"/>
        <end position="469"/>
    </location>
</feature>
<feature type="transmembrane region" description="Helical" evidence="1">
    <location>
        <begin position="441"/>
        <end position="461"/>
    </location>
</feature>
<feature type="domain" description="NAC" evidence="2">
    <location>
        <begin position="13"/>
        <end position="164"/>
    </location>
</feature>
<feature type="DNA-binding region" evidence="2">
    <location>
        <begin position="113"/>
        <end position="170"/>
    </location>
</feature>
<feature type="region of interest" description="Disordered" evidence="3">
    <location>
        <begin position="172"/>
        <end position="191"/>
    </location>
</feature>
<feature type="modified residue" description="Phosphothreonine" evidence="7">
    <location>
        <position position="142"/>
    </location>
</feature>
<comment type="function">
    <text evidence="5 6 7">Transcriptional activator activated by proteolytic cleavage through regulated intramembrane proteolysis (RIP) (PubMed:19947982, PubMed:20156199). Transcriptional activator involved in response to cold stress. Mediates induction of pathogenesis-related (PR) genes independently of salicylic signaling in response to cold. Binds directly to the PR gene promoters and enhances plant resistance to pathogen infection, incorporating cold signals into pathogen resistance responses (PubMed:19947982). Plays a regulatory role in abscisic acid (ABA)-mediated drought-resistance response (PubMed:22967043).</text>
</comment>
<comment type="subcellular location">
    <subcellularLocation>
        <location evidence="5">Cell membrane</location>
        <topology evidence="1">Single-pass membrane protein</topology>
    </subcellularLocation>
    <subcellularLocation>
        <location evidence="2 5 6 7">Nucleus</location>
    </subcellularLocation>
    <text evidence="5 6">Localized primarily in plasma membrane as dormant form and, upon cold or stress, is processed into a transcriptionally active and nuclear form after a proteolytic cleavage through regulated intramembrane proteolysis (RIP).</text>
</comment>
<comment type="tissue specificity">
    <text evidence="4">Expressed in roots, rosette leaves, cauline leaves and stems.</text>
</comment>
<comment type="induction">
    <text evidence="4">By salt, drought stress, abscisic acid (ABA), salicylic acid (SA) and methyl methanesulfonate (MMS) treatment.</text>
</comment>
<comment type="domain">
    <text evidence="2">The NAC domain includes a DNA binding domain and a dimerization domain.</text>
</comment>
<comment type="PTM">
    <text evidence="7">Phosphorylated at Thr-142 by SRK2C/SNRK2.8. Phosphorylation at Thr-142 is required for nuclear import.</text>
</comment>
<comment type="miscellaneous">
    <text evidence="7">Plants over-expressing NTL6 show enhanced drought resistance.</text>
</comment>
<organism>
    <name type="scientific">Arabidopsis thaliana</name>
    <name type="common">Mouse-ear cress</name>
    <dbReference type="NCBI Taxonomy" id="3702"/>
    <lineage>
        <taxon>Eukaryota</taxon>
        <taxon>Viridiplantae</taxon>
        <taxon>Streptophyta</taxon>
        <taxon>Embryophyta</taxon>
        <taxon>Tracheophyta</taxon>
        <taxon>Spermatophyta</taxon>
        <taxon>Magnoliopsida</taxon>
        <taxon>eudicotyledons</taxon>
        <taxon>Gunneridae</taxon>
        <taxon>Pentapetalae</taxon>
        <taxon>rosids</taxon>
        <taxon>malvids</taxon>
        <taxon>Brassicales</taxon>
        <taxon>Brassicaceae</taxon>
        <taxon>Camelineae</taxon>
        <taxon>Arabidopsis</taxon>
    </lineage>
</organism>
<gene>
    <name evidence="11" type="primary">NAC062</name>
    <name evidence="9" type="synonym">NTL6</name>
    <name evidence="10" type="ordered locus">At3g49530</name>
    <name evidence="12" type="ORF">T9C5.120</name>
</gene>
<reference key="1">
    <citation type="journal article" date="2000" name="Nature">
        <title>Sequence and analysis of chromosome 3 of the plant Arabidopsis thaliana.</title>
        <authorList>
            <person name="Salanoubat M."/>
            <person name="Lemcke K."/>
            <person name="Rieger M."/>
            <person name="Ansorge W."/>
            <person name="Unseld M."/>
            <person name="Fartmann B."/>
            <person name="Valle G."/>
            <person name="Bloecker H."/>
            <person name="Perez-Alonso M."/>
            <person name="Obermaier B."/>
            <person name="Delseny M."/>
            <person name="Boutry M."/>
            <person name="Grivell L.A."/>
            <person name="Mache R."/>
            <person name="Puigdomenech P."/>
            <person name="De Simone V."/>
            <person name="Choisne N."/>
            <person name="Artiguenave F."/>
            <person name="Robert C."/>
            <person name="Brottier P."/>
            <person name="Wincker P."/>
            <person name="Cattolico L."/>
            <person name="Weissenbach J."/>
            <person name="Saurin W."/>
            <person name="Quetier F."/>
            <person name="Schaefer M."/>
            <person name="Mueller-Auer S."/>
            <person name="Gabel C."/>
            <person name="Fuchs M."/>
            <person name="Benes V."/>
            <person name="Wurmbach E."/>
            <person name="Drzonek H."/>
            <person name="Erfle H."/>
            <person name="Jordan N."/>
            <person name="Bangert S."/>
            <person name="Wiedelmann R."/>
            <person name="Kranz H."/>
            <person name="Voss H."/>
            <person name="Holland R."/>
            <person name="Brandt P."/>
            <person name="Nyakatura G."/>
            <person name="Vezzi A."/>
            <person name="D'Angelo M."/>
            <person name="Pallavicini A."/>
            <person name="Toppo S."/>
            <person name="Simionati B."/>
            <person name="Conrad A."/>
            <person name="Hornischer K."/>
            <person name="Kauer G."/>
            <person name="Loehnert T.-H."/>
            <person name="Nordsiek G."/>
            <person name="Reichelt J."/>
            <person name="Scharfe M."/>
            <person name="Schoen O."/>
            <person name="Bargues M."/>
            <person name="Terol J."/>
            <person name="Climent J."/>
            <person name="Navarro P."/>
            <person name="Collado C."/>
            <person name="Perez-Perez A."/>
            <person name="Ottenwaelder B."/>
            <person name="Duchemin D."/>
            <person name="Cooke R."/>
            <person name="Laudie M."/>
            <person name="Berger-Llauro C."/>
            <person name="Purnelle B."/>
            <person name="Masuy D."/>
            <person name="de Haan M."/>
            <person name="Maarse A.C."/>
            <person name="Alcaraz J.-P."/>
            <person name="Cottet A."/>
            <person name="Casacuberta E."/>
            <person name="Monfort A."/>
            <person name="Argiriou A."/>
            <person name="Flores M."/>
            <person name="Liguori R."/>
            <person name="Vitale D."/>
            <person name="Mannhaupt G."/>
            <person name="Haase D."/>
            <person name="Schoof H."/>
            <person name="Rudd S."/>
            <person name="Zaccaria P."/>
            <person name="Mewes H.-W."/>
            <person name="Mayer K.F.X."/>
            <person name="Kaul S."/>
            <person name="Town C.D."/>
            <person name="Koo H.L."/>
            <person name="Tallon L.J."/>
            <person name="Jenkins J."/>
            <person name="Rooney T."/>
            <person name="Rizzo M."/>
            <person name="Walts A."/>
            <person name="Utterback T."/>
            <person name="Fujii C.Y."/>
            <person name="Shea T.P."/>
            <person name="Creasy T.H."/>
            <person name="Haas B."/>
            <person name="Maiti R."/>
            <person name="Wu D."/>
            <person name="Peterson J."/>
            <person name="Van Aken S."/>
            <person name="Pai G."/>
            <person name="Militscher J."/>
            <person name="Sellers P."/>
            <person name="Gill J.E."/>
            <person name="Feldblyum T.V."/>
            <person name="Preuss D."/>
            <person name="Lin X."/>
            <person name="Nierman W.C."/>
            <person name="Salzberg S.L."/>
            <person name="White O."/>
            <person name="Venter J.C."/>
            <person name="Fraser C.M."/>
            <person name="Kaneko T."/>
            <person name="Nakamura Y."/>
            <person name="Sato S."/>
            <person name="Kato T."/>
            <person name="Asamizu E."/>
            <person name="Sasamoto S."/>
            <person name="Kimura T."/>
            <person name="Idesawa K."/>
            <person name="Kawashima K."/>
            <person name="Kishida Y."/>
            <person name="Kiyokawa C."/>
            <person name="Kohara M."/>
            <person name="Matsumoto M."/>
            <person name="Matsuno A."/>
            <person name="Muraki A."/>
            <person name="Nakayama S."/>
            <person name="Nakazaki N."/>
            <person name="Shinpo S."/>
            <person name="Takeuchi C."/>
            <person name="Wada T."/>
            <person name="Watanabe A."/>
            <person name="Yamada M."/>
            <person name="Yasuda M."/>
            <person name="Tabata S."/>
        </authorList>
    </citation>
    <scope>NUCLEOTIDE SEQUENCE [LARGE SCALE GENOMIC DNA]</scope>
    <source>
        <strain>cv. Columbia</strain>
    </source>
</reference>
<reference key="2">
    <citation type="journal article" date="2017" name="Plant J.">
        <title>Araport11: a complete reannotation of the Arabidopsis thaliana reference genome.</title>
        <authorList>
            <person name="Cheng C.Y."/>
            <person name="Krishnakumar V."/>
            <person name="Chan A.P."/>
            <person name="Thibaud-Nissen F."/>
            <person name="Schobel S."/>
            <person name="Town C.D."/>
        </authorList>
    </citation>
    <scope>GENOME REANNOTATION</scope>
    <source>
        <strain>cv. Columbia</strain>
    </source>
</reference>
<reference key="3">
    <citation type="journal article" date="2003" name="Science">
        <title>Empirical analysis of transcriptional activity in the Arabidopsis genome.</title>
        <authorList>
            <person name="Yamada K."/>
            <person name="Lim J."/>
            <person name="Dale J.M."/>
            <person name="Chen H."/>
            <person name="Shinn P."/>
            <person name="Palm C.J."/>
            <person name="Southwick A.M."/>
            <person name="Wu H.C."/>
            <person name="Kim C.J."/>
            <person name="Nguyen M."/>
            <person name="Pham P.K."/>
            <person name="Cheuk R.F."/>
            <person name="Karlin-Newmann G."/>
            <person name="Liu S.X."/>
            <person name="Lam B."/>
            <person name="Sakano H."/>
            <person name="Wu T."/>
            <person name="Yu G."/>
            <person name="Miranda M."/>
            <person name="Quach H.L."/>
            <person name="Tripp M."/>
            <person name="Chang C.H."/>
            <person name="Lee J.M."/>
            <person name="Toriumi M.J."/>
            <person name="Chan M.M."/>
            <person name="Tang C.C."/>
            <person name="Onodera C.S."/>
            <person name="Deng J.M."/>
            <person name="Akiyama K."/>
            <person name="Ansari Y."/>
            <person name="Arakawa T."/>
            <person name="Banh J."/>
            <person name="Banno F."/>
            <person name="Bowser L."/>
            <person name="Brooks S.Y."/>
            <person name="Carninci P."/>
            <person name="Chao Q."/>
            <person name="Choy N."/>
            <person name="Enju A."/>
            <person name="Goldsmith A.D."/>
            <person name="Gurjal M."/>
            <person name="Hansen N.F."/>
            <person name="Hayashizaki Y."/>
            <person name="Johnson-Hopson C."/>
            <person name="Hsuan V.W."/>
            <person name="Iida K."/>
            <person name="Karnes M."/>
            <person name="Khan S."/>
            <person name="Koesema E."/>
            <person name="Ishida J."/>
            <person name="Jiang P.X."/>
            <person name="Jones T."/>
            <person name="Kawai J."/>
            <person name="Kamiya A."/>
            <person name="Meyers C."/>
            <person name="Nakajima M."/>
            <person name="Narusaka M."/>
            <person name="Seki M."/>
            <person name="Sakurai T."/>
            <person name="Satou M."/>
            <person name="Tamse R."/>
            <person name="Vaysberg M."/>
            <person name="Wallender E.K."/>
            <person name="Wong C."/>
            <person name="Yamamura Y."/>
            <person name="Yuan S."/>
            <person name="Shinozaki K."/>
            <person name="Davis R.W."/>
            <person name="Theologis A."/>
            <person name="Ecker J.R."/>
        </authorList>
    </citation>
    <scope>NUCLEOTIDE SEQUENCE [LARGE SCALE MRNA]</scope>
    <source>
        <strain>cv. Columbia</strain>
    </source>
</reference>
<reference key="4">
    <citation type="journal article" date="2003" name="DNA Res.">
        <title>Comprehensive analysis of NAC family genes in Oryza sativa and Arabidopsis thaliana.</title>
        <authorList>
            <person name="Ooka H."/>
            <person name="Satoh K."/>
            <person name="Doi K."/>
            <person name="Nagata T."/>
            <person name="Otomo Y."/>
            <person name="Murakami K."/>
            <person name="Matsubara K."/>
            <person name="Osato N."/>
            <person name="Kawai J."/>
            <person name="Carninci P."/>
            <person name="Hayashizaki Y."/>
            <person name="Suzuki K."/>
            <person name="Kojima K."/>
            <person name="Takahara Y."/>
            <person name="Yamamoto K."/>
            <person name="Kikuchi S."/>
        </authorList>
    </citation>
    <scope>GENE FAMILY</scope>
    <scope>NOMENCLATURE</scope>
</reference>
<reference key="5">
    <citation type="journal article" date="2007" name="Nucleic Acids Res.">
        <title>Exploring membrane-associated NAC transcription factors in Arabidopsis: implications for membrane biology in genome regulation.</title>
        <authorList>
            <person name="Kim S.Y."/>
            <person name="Kim S.G."/>
            <person name="Kim Y.S."/>
            <person name="Seo P.J."/>
            <person name="Bae M."/>
            <person name="Yoon H.K."/>
            <person name="Park C.M."/>
        </authorList>
    </citation>
    <scope>GENE FAMILY</scope>
    <scope>NOMENCLATURE</scope>
    <scope>TISSUE SPECIFICITY</scope>
    <scope>INDUCTION</scope>
</reference>
<reference key="6">
    <citation type="journal article" date="2010" name="Biochem. J.">
        <title>Proteolytic processing of an Arabidopsis membrane-bound NAC transcription factor is triggered by cold-induced changes in membrane fluidity.</title>
        <authorList>
            <person name="Seo P.J."/>
            <person name="Kim M.J."/>
            <person name="Song J.S."/>
            <person name="Kim Y.S."/>
            <person name="Kim H.J."/>
            <person name="Park C.M."/>
        </authorList>
    </citation>
    <scope>SUBCELLULAR LOCATION</scope>
</reference>
<reference key="7">
    <citation type="journal article" date="2010" name="Plant J.">
        <title>Cold activation of a plasma membrane-tethered NAC transcription factor induces a pathogen resistance response in Arabidopsis.</title>
        <authorList>
            <person name="Seo P.J."/>
            <person name="Kim M.J."/>
            <person name="Park J.Y."/>
            <person name="Kim S.Y."/>
            <person name="Jeon J."/>
            <person name="Lee Y.H."/>
            <person name="Kim J."/>
            <person name="Park C.M."/>
        </authorList>
    </citation>
    <scope>FUNCTION</scope>
    <scope>SUBCELLULAR LOCATION</scope>
</reference>
<reference key="8">
    <citation type="journal article" date="2012" name="Biochem. J.">
        <title>Controlled nuclear import of the transcription factor NTL6 reveals a cytoplasmic role of SnRK2.8 in the drought-stress response.</title>
        <authorList>
            <person name="Kim M.J."/>
            <person name="Park M.J."/>
            <person name="Seo P.J."/>
            <person name="Song J.S."/>
            <person name="Kim H.J."/>
            <person name="Park C.M."/>
        </authorList>
    </citation>
    <scope>FUNCTION</scope>
    <scope>SUBCELLULAR LOCATION</scope>
    <scope>PHOSPHORYLATION AT THR-142</scope>
</reference>
<sequence>MNQNLHVLSMDSLPVGLRFRPTDEELIRYYLRRKINGHDDDVKAIREIDICKWEPWDLPDFSVIKTKDSEWLYFCPLDRKYPSGSRQNRATVAGYWKATGKDRKIKSGKTNIIGVKRTLVFHAGRAPRGTRTNWIIHEYRATEDDLSGTNPGQSPFVICKLFKKEELVLGEEDSKSDEVEEPAVSSPTVEVTKSEVSEVIKTEDVKRHDIAESSLVISGDSHSDACDEATTAELVDFKWYPELESLDFTLFSPLHSQVQSELGSSYNTFQPGSSNFSGNNNNSFQIQTQYGTNEVDTYISDFLDSILKSPDEDPEKHKYVLQSGFDVVAPDQIAQVCQQGSAVDMSNDVSVTGIQIKSRQAQPSGYTNDYIAQGNGPRRLRLQSNFNGINTKNPELQAIKREAEDTVGESIKKRCGKLMRSKNVTGFVFKKITSVKCSYGGLFRAAVVAVVFLMSVCSLTVDFRASAVS</sequence>
<accession>Q9SCK6</accession>
<protein>
    <recommendedName>
        <fullName evidence="8">NAC domain-containing protein 62</fullName>
        <shortName evidence="8">ANAC062</shortName>
    </recommendedName>
    <alternativeName>
        <fullName evidence="9">Protein NTM1-like 6</fullName>
    </alternativeName>
</protein>
<name>NAC62_ARATH</name>
<evidence type="ECO:0000255" key="1"/>
<evidence type="ECO:0000255" key="2">
    <source>
        <dbReference type="PROSITE-ProRule" id="PRU00353"/>
    </source>
</evidence>
<evidence type="ECO:0000256" key="3">
    <source>
        <dbReference type="SAM" id="MobiDB-lite"/>
    </source>
</evidence>
<evidence type="ECO:0000269" key="4">
    <source>
    </source>
</evidence>
<evidence type="ECO:0000269" key="5">
    <source>
    </source>
</evidence>
<evidence type="ECO:0000269" key="6">
    <source>
    </source>
</evidence>
<evidence type="ECO:0000269" key="7">
    <source>
    </source>
</evidence>
<evidence type="ECO:0000303" key="8">
    <source>
    </source>
</evidence>
<evidence type="ECO:0000303" key="9">
    <source>
    </source>
</evidence>
<evidence type="ECO:0000312" key="10">
    <source>
        <dbReference type="Araport" id="AT3G49530"/>
    </source>
</evidence>
<evidence type="ECO:0000312" key="11">
    <source>
        <dbReference type="EMBL" id="AEE78553.1"/>
    </source>
</evidence>
<evidence type="ECO:0000312" key="12">
    <source>
        <dbReference type="EMBL" id="CAB62457.1"/>
    </source>
</evidence>
<proteinExistence type="evidence at protein level"/>
<keyword id="KW-0010">Activator</keyword>
<keyword id="KW-1003">Cell membrane</keyword>
<keyword id="KW-0238">DNA-binding</keyword>
<keyword id="KW-0472">Membrane</keyword>
<keyword id="KW-0539">Nucleus</keyword>
<keyword id="KW-0597">Phosphoprotein</keyword>
<keyword id="KW-1185">Reference proteome</keyword>
<keyword id="KW-0346">Stress response</keyword>
<keyword id="KW-0804">Transcription</keyword>
<keyword id="KW-0805">Transcription regulation</keyword>
<keyword id="KW-0812">Transmembrane</keyword>
<keyword id="KW-1133">Transmembrane helix</keyword>